<proteinExistence type="inferred from homology"/>
<comment type="function">
    <text evidence="1">Catalyzes a mechanistically unusual reaction, the ATP-dependent insertion of CO2 between the N7 and N8 nitrogen atoms of 7,8-diaminopelargonic acid (DAPA, also called 7,8-diammoniononanoate) to form a ureido ring.</text>
</comment>
<comment type="catalytic activity">
    <reaction evidence="1">
        <text>(7R,8S)-7,8-diammoniononanoate + CO2 + ATP = (4R,5S)-dethiobiotin + ADP + phosphate + 3 H(+)</text>
        <dbReference type="Rhea" id="RHEA:15805"/>
        <dbReference type="ChEBI" id="CHEBI:15378"/>
        <dbReference type="ChEBI" id="CHEBI:16526"/>
        <dbReference type="ChEBI" id="CHEBI:30616"/>
        <dbReference type="ChEBI" id="CHEBI:43474"/>
        <dbReference type="ChEBI" id="CHEBI:149469"/>
        <dbReference type="ChEBI" id="CHEBI:149473"/>
        <dbReference type="ChEBI" id="CHEBI:456216"/>
        <dbReference type="EC" id="6.3.3.3"/>
    </reaction>
</comment>
<comment type="cofactor">
    <cofactor evidence="1">
        <name>Mg(2+)</name>
        <dbReference type="ChEBI" id="CHEBI:18420"/>
    </cofactor>
</comment>
<comment type="pathway">
    <text evidence="1">Cofactor biosynthesis; biotin biosynthesis; biotin from 7,8-diaminononanoate: step 1/2.</text>
</comment>
<comment type="subunit">
    <text evidence="1">Homodimer.</text>
</comment>
<comment type="subcellular location">
    <subcellularLocation>
        <location evidence="1">Cytoplasm</location>
    </subcellularLocation>
</comment>
<comment type="similarity">
    <text evidence="1">Belongs to the dethiobiotin synthetase family.</text>
</comment>
<evidence type="ECO:0000255" key="1">
    <source>
        <dbReference type="HAMAP-Rule" id="MF_00336"/>
    </source>
</evidence>
<feature type="chain" id="PRO_1000133217" description="ATP-dependent dethiobiotin synthetase BioD">
    <location>
        <begin position="1"/>
        <end position="228"/>
    </location>
</feature>
<feature type="active site" evidence="1">
    <location>
        <position position="37"/>
    </location>
</feature>
<feature type="binding site" evidence="1">
    <location>
        <begin position="12"/>
        <end position="17"/>
    </location>
    <ligand>
        <name>ATP</name>
        <dbReference type="ChEBI" id="CHEBI:30616"/>
    </ligand>
</feature>
<feature type="binding site" evidence="1">
    <location>
        <position position="16"/>
    </location>
    <ligand>
        <name>Mg(2+)</name>
        <dbReference type="ChEBI" id="CHEBI:18420"/>
    </ligand>
</feature>
<feature type="binding site" evidence="1">
    <location>
        <position position="53"/>
    </location>
    <ligand>
        <name>ATP</name>
        <dbReference type="ChEBI" id="CHEBI:30616"/>
    </ligand>
</feature>
<feature type="binding site" evidence="1">
    <location>
        <position position="53"/>
    </location>
    <ligand>
        <name>Mg(2+)</name>
        <dbReference type="ChEBI" id="CHEBI:18420"/>
    </ligand>
</feature>
<feature type="binding site" evidence="1">
    <location>
        <begin position="114"/>
        <end position="117"/>
    </location>
    <ligand>
        <name>ATP</name>
        <dbReference type="ChEBI" id="CHEBI:30616"/>
    </ligand>
</feature>
<feature type="binding site" evidence="1">
    <location>
        <position position="114"/>
    </location>
    <ligand>
        <name>Mg(2+)</name>
        <dbReference type="ChEBI" id="CHEBI:18420"/>
    </ligand>
</feature>
<feature type="binding site" evidence="1">
    <location>
        <begin position="174"/>
        <end position="175"/>
    </location>
    <ligand>
        <name>ATP</name>
        <dbReference type="ChEBI" id="CHEBI:30616"/>
    </ligand>
</feature>
<feature type="binding site" evidence="1">
    <location>
        <begin position="203"/>
        <end position="205"/>
    </location>
    <ligand>
        <name>ATP</name>
        <dbReference type="ChEBI" id="CHEBI:30616"/>
    </ligand>
</feature>
<feature type="binding site" evidence="1">
    <location>
        <position position="210"/>
    </location>
    <ligand>
        <name>ATP</name>
        <dbReference type="ChEBI" id="CHEBI:30616"/>
    </ligand>
</feature>
<sequence>MKSIFVAGTDTDVGKTYITAGLAVALRKMNVDVGVMKPFAAGTAQKKGFKSEDVEILAKAAQVADPENLINPQFFPIPASPYTAWKNLKTKPKVSTILSSFKKLSKLHEMILVEGMGGIMTPILKDYYITNLIKEMKIPSVIVTRSKVGTVNHTIMTIQMCQKYKIPIKGIIINDFDDDGYPIKNLKRDLESLTGVKVLGSIPFIKDMSNASLNRIFKKNIDLKSLLK</sequence>
<gene>
    <name evidence="1" type="primary">bioD</name>
    <name type="ordered locus">Nmar_0823</name>
</gene>
<keyword id="KW-0067">ATP-binding</keyword>
<keyword id="KW-0093">Biotin biosynthesis</keyword>
<keyword id="KW-0963">Cytoplasm</keyword>
<keyword id="KW-0436">Ligase</keyword>
<keyword id="KW-0460">Magnesium</keyword>
<keyword id="KW-0479">Metal-binding</keyword>
<keyword id="KW-0547">Nucleotide-binding</keyword>
<keyword id="KW-1185">Reference proteome</keyword>
<protein>
    <recommendedName>
        <fullName evidence="1">ATP-dependent dethiobiotin synthetase BioD</fullName>
        <ecNumber evidence="1">6.3.3.3</ecNumber>
    </recommendedName>
    <alternativeName>
        <fullName evidence="1">DTB synthetase</fullName>
        <shortName evidence="1">DTBS</shortName>
    </alternativeName>
    <alternativeName>
        <fullName evidence="1">Dethiobiotin synthase</fullName>
    </alternativeName>
</protein>
<dbReference type="EC" id="6.3.3.3" evidence="1"/>
<dbReference type="EMBL" id="CP000866">
    <property type="protein sequence ID" value="ABX12719.1"/>
    <property type="molecule type" value="Genomic_DNA"/>
</dbReference>
<dbReference type="RefSeq" id="WP_012215206.1">
    <property type="nucleotide sequence ID" value="NC_010085.1"/>
</dbReference>
<dbReference type="SMR" id="A9A5K8"/>
<dbReference type="STRING" id="436308.Nmar_0823"/>
<dbReference type="EnsemblBacteria" id="ABX12719">
    <property type="protein sequence ID" value="ABX12719"/>
    <property type="gene ID" value="Nmar_0823"/>
</dbReference>
<dbReference type="GeneID" id="5773960"/>
<dbReference type="KEGG" id="nmr:Nmar_0823"/>
<dbReference type="eggNOG" id="arCOG00100">
    <property type="taxonomic scope" value="Archaea"/>
</dbReference>
<dbReference type="HOGENOM" id="CLU_072551_3_1_2"/>
<dbReference type="InParanoid" id="A9A5K8"/>
<dbReference type="OrthoDB" id="50320at2157"/>
<dbReference type="PhylomeDB" id="A9A5K8"/>
<dbReference type="UniPathway" id="UPA00078">
    <property type="reaction ID" value="UER00161"/>
</dbReference>
<dbReference type="Proteomes" id="UP000000792">
    <property type="component" value="Chromosome"/>
</dbReference>
<dbReference type="GO" id="GO:0005829">
    <property type="term" value="C:cytosol"/>
    <property type="evidence" value="ECO:0000318"/>
    <property type="project" value="GO_Central"/>
</dbReference>
<dbReference type="GO" id="GO:0005524">
    <property type="term" value="F:ATP binding"/>
    <property type="evidence" value="ECO:0007669"/>
    <property type="project" value="UniProtKB-UniRule"/>
</dbReference>
<dbReference type="GO" id="GO:0004141">
    <property type="term" value="F:dethiobiotin synthase activity"/>
    <property type="evidence" value="ECO:0000318"/>
    <property type="project" value="GO_Central"/>
</dbReference>
<dbReference type="GO" id="GO:0000287">
    <property type="term" value="F:magnesium ion binding"/>
    <property type="evidence" value="ECO:0007669"/>
    <property type="project" value="UniProtKB-UniRule"/>
</dbReference>
<dbReference type="GO" id="GO:0009102">
    <property type="term" value="P:biotin biosynthetic process"/>
    <property type="evidence" value="ECO:0000318"/>
    <property type="project" value="GO_Central"/>
</dbReference>
<dbReference type="CDD" id="cd03109">
    <property type="entry name" value="DTBS"/>
    <property type="match status" value="1"/>
</dbReference>
<dbReference type="FunFam" id="3.40.50.300:FF:000292">
    <property type="entry name" value="ATP-dependent dethiobiotin synthetase BioD"/>
    <property type="match status" value="1"/>
</dbReference>
<dbReference type="Gene3D" id="3.40.50.300">
    <property type="entry name" value="P-loop containing nucleotide triphosphate hydrolases"/>
    <property type="match status" value="1"/>
</dbReference>
<dbReference type="HAMAP" id="MF_00336">
    <property type="entry name" value="BioD"/>
    <property type="match status" value="1"/>
</dbReference>
<dbReference type="InterPro" id="IPR004472">
    <property type="entry name" value="DTB_synth_BioD"/>
</dbReference>
<dbReference type="InterPro" id="IPR027417">
    <property type="entry name" value="P-loop_NTPase"/>
</dbReference>
<dbReference type="NCBIfam" id="TIGR00347">
    <property type="entry name" value="bioD"/>
    <property type="match status" value="1"/>
</dbReference>
<dbReference type="PANTHER" id="PTHR43210">
    <property type="entry name" value="DETHIOBIOTIN SYNTHETASE"/>
    <property type="match status" value="1"/>
</dbReference>
<dbReference type="PANTHER" id="PTHR43210:SF5">
    <property type="entry name" value="DETHIOBIOTIN SYNTHETASE"/>
    <property type="match status" value="1"/>
</dbReference>
<dbReference type="Pfam" id="PF13500">
    <property type="entry name" value="AAA_26"/>
    <property type="match status" value="1"/>
</dbReference>
<dbReference type="PIRSF" id="PIRSF006755">
    <property type="entry name" value="DTB_synth"/>
    <property type="match status" value="1"/>
</dbReference>
<dbReference type="SUPFAM" id="SSF52540">
    <property type="entry name" value="P-loop containing nucleoside triphosphate hydrolases"/>
    <property type="match status" value="1"/>
</dbReference>
<organism>
    <name type="scientific">Nitrosopumilus maritimus (strain SCM1)</name>
    <dbReference type="NCBI Taxonomy" id="436308"/>
    <lineage>
        <taxon>Archaea</taxon>
        <taxon>Nitrososphaerota</taxon>
        <taxon>Nitrososphaeria</taxon>
        <taxon>Nitrosopumilales</taxon>
        <taxon>Nitrosopumilaceae</taxon>
        <taxon>Nitrosopumilus</taxon>
    </lineage>
</organism>
<accession>A9A5K8</accession>
<reference key="1">
    <citation type="journal article" date="2010" name="Proc. Natl. Acad. Sci. U.S.A.">
        <title>Nitrosopumilus maritimus genome reveals unique mechanisms for nitrification and autotrophy in globally distributed marine crenarchaea.</title>
        <authorList>
            <person name="Walker C.B."/>
            <person name="de la Torre J.R."/>
            <person name="Klotz M.G."/>
            <person name="Urakawa H."/>
            <person name="Pinel N."/>
            <person name="Arp D.J."/>
            <person name="Brochier-Armanet C."/>
            <person name="Chain P.S."/>
            <person name="Chan P.P."/>
            <person name="Gollabgir A."/>
            <person name="Hemp J."/>
            <person name="Hugler M."/>
            <person name="Karr E.A."/>
            <person name="Konneke M."/>
            <person name="Shin M."/>
            <person name="Lawton T.J."/>
            <person name="Lowe T."/>
            <person name="Martens-Habbena W."/>
            <person name="Sayavedra-Soto L.A."/>
            <person name="Lang D."/>
            <person name="Sievert S.M."/>
            <person name="Rosenzweig A.C."/>
            <person name="Manning G."/>
            <person name="Stahl D.A."/>
        </authorList>
    </citation>
    <scope>NUCLEOTIDE SEQUENCE [LARGE SCALE GENOMIC DNA]</scope>
    <source>
        <strain>SCM1</strain>
    </source>
</reference>
<name>BIOD_NITMS</name>